<gene>
    <name evidence="1" type="primary">pepT</name>
    <name type="ordered locus">USA300HOU_0770</name>
</gene>
<feature type="chain" id="PRO_1000081964" description="Peptidase T">
    <location>
        <begin position="1"/>
        <end position="408"/>
    </location>
</feature>
<feature type="region of interest" description="Disordered" evidence="2">
    <location>
        <begin position="1"/>
        <end position="28"/>
    </location>
</feature>
<feature type="compositionally biased region" description="Polar residues" evidence="2">
    <location>
        <begin position="11"/>
        <end position="28"/>
    </location>
</feature>
<feature type="active site" evidence="1">
    <location>
        <position position="80"/>
    </location>
</feature>
<feature type="active site" description="Proton acceptor" evidence="1">
    <location>
        <position position="174"/>
    </location>
</feature>
<feature type="binding site" evidence="1">
    <location>
        <position position="78"/>
    </location>
    <ligand>
        <name>Zn(2+)</name>
        <dbReference type="ChEBI" id="CHEBI:29105"/>
        <label>1</label>
    </ligand>
</feature>
<feature type="binding site" evidence="1">
    <location>
        <position position="140"/>
    </location>
    <ligand>
        <name>Zn(2+)</name>
        <dbReference type="ChEBI" id="CHEBI:29105"/>
        <label>1</label>
    </ligand>
</feature>
<feature type="binding site" evidence="1">
    <location>
        <position position="140"/>
    </location>
    <ligand>
        <name>Zn(2+)</name>
        <dbReference type="ChEBI" id="CHEBI:29105"/>
        <label>2</label>
    </ligand>
</feature>
<feature type="binding site" evidence="1">
    <location>
        <position position="175"/>
    </location>
    <ligand>
        <name>Zn(2+)</name>
        <dbReference type="ChEBI" id="CHEBI:29105"/>
        <label>2</label>
    </ligand>
</feature>
<feature type="binding site" evidence="1">
    <location>
        <position position="197"/>
    </location>
    <ligand>
        <name>Zn(2+)</name>
        <dbReference type="ChEBI" id="CHEBI:29105"/>
        <label>1</label>
    </ligand>
</feature>
<feature type="binding site" evidence="1">
    <location>
        <position position="379"/>
    </location>
    <ligand>
        <name>Zn(2+)</name>
        <dbReference type="ChEBI" id="CHEBI:29105"/>
        <label>2</label>
    </ligand>
</feature>
<comment type="function">
    <text evidence="1">Cleaves the N-terminal amino acid of tripeptides.</text>
</comment>
<comment type="catalytic activity">
    <reaction evidence="1">
        <text>Release of the N-terminal residue from a tripeptide.</text>
        <dbReference type="EC" id="3.4.11.4"/>
    </reaction>
</comment>
<comment type="cofactor">
    <cofactor evidence="1">
        <name>Zn(2+)</name>
        <dbReference type="ChEBI" id="CHEBI:29105"/>
    </cofactor>
    <text evidence="1">Binds 2 Zn(2+) ions per subunit.</text>
</comment>
<comment type="subcellular location">
    <subcellularLocation>
        <location evidence="1">Cytoplasm</location>
    </subcellularLocation>
</comment>
<comment type="similarity">
    <text evidence="1">Belongs to the peptidase M20B family.</text>
</comment>
<name>PEPT_STAAT</name>
<reference key="1">
    <citation type="journal article" date="2007" name="BMC Microbiol.">
        <title>Subtle genetic changes enhance virulence of methicillin resistant and sensitive Staphylococcus aureus.</title>
        <authorList>
            <person name="Highlander S.K."/>
            <person name="Hulten K.G."/>
            <person name="Qin X."/>
            <person name="Jiang H."/>
            <person name="Yerrapragada S."/>
            <person name="Mason E.O. Jr."/>
            <person name="Shang Y."/>
            <person name="Williams T.M."/>
            <person name="Fortunov R.M."/>
            <person name="Liu Y."/>
            <person name="Igboeli O."/>
            <person name="Petrosino J."/>
            <person name="Tirumalai M."/>
            <person name="Uzman A."/>
            <person name="Fox G.E."/>
            <person name="Cardenas A.M."/>
            <person name="Muzny D.M."/>
            <person name="Hemphill L."/>
            <person name="Ding Y."/>
            <person name="Dugan S."/>
            <person name="Blyth P.R."/>
            <person name="Buhay C.J."/>
            <person name="Dinh H.H."/>
            <person name="Hawes A.C."/>
            <person name="Holder M."/>
            <person name="Kovar C.L."/>
            <person name="Lee S.L."/>
            <person name="Liu W."/>
            <person name="Nazareth L.V."/>
            <person name="Wang Q."/>
            <person name="Zhou J."/>
            <person name="Kaplan S.L."/>
            <person name="Weinstock G.M."/>
        </authorList>
    </citation>
    <scope>NUCLEOTIDE SEQUENCE [LARGE SCALE GENOMIC DNA]</scope>
    <source>
        <strain>USA300 / TCH1516</strain>
    </source>
</reference>
<proteinExistence type="inferred from homology"/>
<sequence length="408" mass="45848">MKNQLIDRLTRYTTIDTQSDPKSTTTPSTEKQWDLLHLLEKELQQLGLPTDLDENGYLFATLESNIDVDVPTVGFLAHVDTSPDFNASNVKPQIIENYDGKPYKLGNTKRVLDPKVFPELNSLVGHTLMVTDGTSLLGADDKAGIVEIMEAICYLQEHPEIKHGTIRIGFTPDEEIGRGPHKFDVDRFNADFAYTMDGSQYGELQYESFNAAEAVITCHGVNVHPGSAKNAMVNAIRLGEQFDSLLPDSEVPERTEGYEGFYHLMNFEGTVEKATLQYIIRDHDKKQFELRKKRILEIRDDINAHFENYPVKVDISDQYFNMAEKILPLPHIIDIPKRVFAKLDIPANTEPIRGGTDGSQLSFMGLPTPNIFTGCGNFHGPYEYASIDVMEKAVQVIIGIVEDIAENH</sequence>
<organism>
    <name type="scientific">Staphylococcus aureus (strain USA300 / TCH1516)</name>
    <dbReference type="NCBI Taxonomy" id="451516"/>
    <lineage>
        <taxon>Bacteria</taxon>
        <taxon>Bacillati</taxon>
        <taxon>Bacillota</taxon>
        <taxon>Bacilli</taxon>
        <taxon>Bacillales</taxon>
        <taxon>Staphylococcaceae</taxon>
        <taxon>Staphylococcus</taxon>
    </lineage>
</organism>
<protein>
    <recommendedName>
        <fullName evidence="1">Peptidase T</fullName>
        <ecNumber evidence="1">3.4.11.4</ecNumber>
    </recommendedName>
    <alternativeName>
        <fullName evidence="1">Aminotripeptidase</fullName>
        <shortName evidence="1">Tripeptidase</shortName>
    </alternativeName>
    <alternativeName>
        <fullName evidence="1">Tripeptide aminopeptidase</fullName>
    </alternativeName>
</protein>
<dbReference type="EC" id="3.4.11.4" evidence="1"/>
<dbReference type="EMBL" id="CP000730">
    <property type="protein sequence ID" value="ABX28791.1"/>
    <property type="molecule type" value="Genomic_DNA"/>
</dbReference>
<dbReference type="RefSeq" id="WP_000795826.1">
    <property type="nucleotide sequence ID" value="NC_010079.1"/>
</dbReference>
<dbReference type="SMR" id="A8Z018"/>
<dbReference type="MEROPS" id="M20.003"/>
<dbReference type="KEGG" id="sax:USA300HOU_0770"/>
<dbReference type="HOGENOM" id="CLU_053676_0_0_9"/>
<dbReference type="GO" id="GO:0005829">
    <property type="term" value="C:cytosol"/>
    <property type="evidence" value="ECO:0007669"/>
    <property type="project" value="TreeGrafter"/>
</dbReference>
<dbReference type="GO" id="GO:0008237">
    <property type="term" value="F:metallopeptidase activity"/>
    <property type="evidence" value="ECO:0007669"/>
    <property type="project" value="UniProtKB-KW"/>
</dbReference>
<dbReference type="GO" id="GO:0045148">
    <property type="term" value="F:tripeptide aminopeptidase activity"/>
    <property type="evidence" value="ECO:0007669"/>
    <property type="project" value="UniProtKB-UniRule"/>
</dbReference>
<dbReference type="GO" id="GO:0008270">
    <property type="term" value="F:zinc ion binding"/>
    <property type="evidence" value="ECO:0007669"/>
    <property type="project" value="UniProtKB-UniRule"/>
</dbReference>
<dbReference type="GO" id="GO:0043171">
    <property type="term" value="P:peptide catabolic process"/>
    <property type="evidence" value="ECO:0007669"/>
    <property type="project" value="UniProtKB-UniRule"/>
</dbReference>
<dbReference type="GO" id="GO:0006508">
    <property type="term" value="P:proteolysis"/>
    <property type="evidence" value="ECO:0007669"/>
    <property type="project" value="UniProtKB-UniRule"/>
</dbReference>
<dbReference type="CDD" id="cd03892">
    <property type="entry name" value="M20_peptT"/>
    <property type="match status" value="1"/>
</dbReference>
<dbReference type="FunFam" id="3.30.70.360:FF:000002">
    <property type="entry name" value="Peptidase T"/>
    <property type="match status" value="1"/>
</dbReference>
<dbReference type="Gene3D" id="3.30.70.360">
    <property type="match status" value="1"/>
</dbReference>
<dbReference type="Gene3D" id="3.40.630.10">
    <property type="entry name" value="Zn peptidases"/>
    <property type="match status" value="1"/>
</dbReference>
<dbReference type="HAMAP" id="MF_00550">
    <property type="entry name" value="Aminopeptidase_M20"/>
    <property type="match status" value="1"/>
</dbReference>
<dbReference type="InterPro" id="IPR001261">
    <property type="entry name" value="ArgE/DapE_CS"/>
</dbReference>
<dbReference type="InterPro" id="IPR036264">
    <property type="entry name" value="Bact_exopeptidase_dim_dom"/>
</dbReference>
<dbReference type="InterPro" id="IPR002933">
    <property type="entry name" value="Peptidase_M20"/>
</dbReference>
<dbReference type="InterPro" id="IPR011650">
    <property type="entry name" value="Peptidase_M20_dimer"/>
</dbReference>
<dbReference type="InterPro" id="IPR010161">
    <property type="entry name" value="Peptidase_M20B"/>
</dbReference>
<dbReference type="NCBIfam" id="TIGR01882">
    <property type="entry name" value="peptidase-T"/>
    <property type="match status" value="1"/>
</dbReference>
<dbReference type="NCBIfam" id="NF003976">
    <property type="entry name" value="PRK05469.1"/>
    <property type="match status" value="1"/>
</dbReference>
<dbReference type="NCBIfam" id="NF009920">
    <property type="entry name" value="PRK13381.1"/>
    <property type="match status" value="1"/>
</dbReference>
<dbReference type="PANTHER" id="PTHR42994">
    <property type="entry name" value="PEPTIDASE T"/>
    <property type="match status" value="1"/>
</dbReference>
<dbReference type="PANTHER" id="PTHR42994:SF1">
    <property type="entry name" value="PEPTIDASE T"/>
    <property type="match status" value="1"/>
</dbReference>
<dbReference type="Pfam" id="PF07687">
    <property type="entry name" value="M20_dimer"/>
    <property type="match status" value="1"/>
</dbReference>
<dbReference type="Pfam" id="PF01546">
    <property type="entry name" value="Peptidase_M20"/>
    <property type="match status" value="1"/>
</dbReference>
<dbReference type="PIRSF" id="PIRSF037215">
    <property type="entry name" value="Peptidase_M20B"/>
    <property type="match status" value="1"/>
</dbReference>
<dbReference type="SUPFAM" id="SSF55031">
    <property type="entry name" value="Bacterial exopeptidase dimerisation domain"/>
    <property type="match status" value="1"/>
</dbReference>
<dbReference type="SUPFAM" id="SSF53187">
    <property type="entry name" value="Zn-dependent exopeptidases"/>
    <property type="match status" value="1"/>
</dbReference>
<dbReference type="PROSITE" id="PS00758">
    <property type="entry name" value="ARGE_DAPE_CPG2_1"/>
    <property type="match status" value="1"/>
</dbReference>
<dbReference type="PROSITE" id="PS00759">
    <property type="entry name" value="ARGE_DAPE_CPG2_2"/>
    <property type="match status" value="1"/>
</dbReference>
<evidence type="ECO:0000255" key="1">
    <source>
        <dbReference type="HAMAP-Rule" id="MF_00550"/>
    </source>
</evidence>
<evidence type="ECO:0000256" key="2">
    <source>
        <dbReference type="SAM" id="MobiDB-lite"/>
    </source>
</evidence>
<accession>A8Z018</accession>
<keyword id="KW-0031">Aminopeptidase</keyword>
<keyword id="KW-0963">Cytoplasm</keyword>
<keyword id="KW-0378">Hydrolase</keyword>
<keyword id="KW-0479">Metal-binding</keyword>
<keyword id="KW-0482">Metalloprotease</keyword>
<keyword id="KW-0645">Protease</keyword>
<keyword id="KW-0862">Zinc</keyword>